<accession>Q92GY0</accession>
<feature type="chain" id="PRO_0000126474" description="Small ribosomal subunit protein uS8">
    <location>
        <begin position="1"/>
        <end position="132"/>
    </location>
</feature>
<comment type="function">
    <text evidence="1">One of the primary rRNA binding proteins, it binds directly to 16S rRNA central domain where it helps coordinate assembly of the platform of the 30S subunit.</text>
</comment>
<comment type="subunit">
    <text evidence="1">Part of the 30S ribosomal subunit. Contacts proteins S5 and S12.</text>
</comment>
<comment type="similarity">
    <text evidence="1">Belongs to the universal ribosomal protein uS8 family.</text>
</comment>
<keyword id="KW-0687">Ribonucleoprotein</keyword>
<keyword id="KW-0689">Ribosomal protein</keyword>
<keyword id="KW-0694">RNA-binding</keyword>
<keyword id="KW-0699">rRNA-binding</keyword>
<organism>
    <name type="scientific">Rickettsia conorii (strain ATCC VR-613 / Malish 7)</name>
    <dbReference type="NCBI Taxonomy" id="272944"/>
    <lineage>
        <taxon>Bacteria</taxon>
        <taxon>Pseudomonadati</taxon>
        <taxon>Pseudomonadota</taxon>
        <taxon>Alphaproteobacteria</taxon>
        <taxon>Rickettsiales</taxon>
        <taxon>Rickettsiaceae</taxon>
        <taxon>Rickettsieae</taxon>
        <taxon>Rickettsia</taxon>
        <taxon>spotted fever group</taxon>
    </lineage>
</organism>
<sequence>MSMTDNVADMLTRIRNAYKSKLINVSFPSSKIKTSILDVLQKEGYIKDYITTQKNNISYTEVALKYSVNGDASICEIHRVSKPGKRVYSAIKDLKGYYNNMGIYILSTPYGVMSDREAHIKNVGGEVICKVF</sequence>
<dbReference type="EMBL" id="AE006914">
    <property type="protein sequence ID" value="AAL03530.1"/>
    <property type="molecule type" value="Genomic_DNA"/>
</dbReference>
<dbReference type="PIR" id="H97823">
    <property type="entry name" value="H97823"/>
</dbReference>
<dbReference type="RefSeq" id="WP_010977581.1">
    <property type="nucleotide sequence ID" value="NC_003103.1"/>
</dbReference>
<dbReference type="SMR" id="Q92GY0"/>
<dbReference type="GeneID" id="95361472"/>
<dbReference type="KEGG" id="rco:RC0992"/>
<dbReference type="HOGENOM" id="CLU_098428_0_0_5"/>
<dbReference type="Proteomes" id="UP000000816">
    <property type="component" value="Chromosome"/>
</dbReference>
<dbReference type="GO" id="GO:1990904">
    <property type="term" value="C:ribonucleoprotein complex"/>
    <property type="evidence" value="ECO:0007669"/>
    <property type="project" value="UniProtKB-KW"/>
</dbReference>
<dbReference type="GO" id="GO:0005840">
    <property type="term" value="C:ribosome"/>
    <property type="evidence" value="ECO:0007669"/>
    <property type="project" value="UniProtKB-KW"/>
</dbReference>
<dbReference type="GO" id="GO:0019843">
    <property type="term" value="F:rRNA binding"/>
    <property type="evidence" value="ECO:0007669"/>
    <property type="project" value="UniProtKB-UniRule"/>
</dbReference>
<dbReference type="GO" id="GO:0003735">
    <property type="term" value="F:structural constituent of ribosome"/>
    <property type="evidence" value="ECO:0007669"/>
    <property type="project" value="InterPro"/>
</dbReference>
<dbReference type="GO" id="GO:0006412">
    <property type="term" value="P:translation"/>
    <property type="evidence" value="ECO:0007669"/>
    <property type="project" value="UniProtKB-UniRule"/>
</dbReference>
<dbReference type="FunFam" id="3.30.1370.30:FF:000002">
    <property type="entry name" value="30S ribosomal protein S8"/>
    <property type="match status" value="1"/>
</dbReference>
<dbReference type="FunFam" id="3.30.1490.10:FF:000001">
    <property type="entry name" value="30S ribosomal protein S8"/>
    <property type="match status" value="1"/>
</dbReference>
<dbReference type="Gene3D" id="3.30.1370.30">
    <property type="match status" value="1"/>
</dbReference>
<dbReference type="Gene3D" id="3.30.1490.10">
    <property type="match status" value="1"/>
</dbReference>
<dbReference type="HAMAP" id="MF_01302_B">
    <property type="entry name" value="Ribosomal_uS8_B"/>
    <property type="match status" value="1"/>
</dbReference>
<dbReference type="InterPro" id="IPR000630">
    <property type="entry name" value="Ribosomal_uS8"/>
</dbReference>
<dbReference type="InterPro" id="IPR047863">
    <property type="entry name" value="Ribosomal_uS8_CS"/>
</dbReference>
<dbReference type="InterPro" id="IPR035987">
    <property type="entry name" value="Ribosomal_uS8_sf"/>
</dbReference>
<dbReference type="NCBIfam" id="NF001109">
    <property type="entry name" value="PRK00136.1"/>
    <property type="match status" value="1"/>
</dbReference>
<dbReference type="PANTHER" id="PTHR11758">
    <property type="entry name" value="40S RIBOSOMAL PROTEIN S15A"/>
    <property type="match status" value="1"/>
</dbReference>
<dbReference type="Pfam" id="PF00410">
    <property type="entry name" value="Ribosomal_S8"/>
    <property type="match status" value="1"/>
</dbReference>
<dbReference type="SUPFAM" id="SSF56047">
    <property type="entry name" value="Ribosomal protein S8"/>
    <property type="match status" value="1"/>
</dbReference>
<dbReference type="PROSITE" id="PS00053">
    <property type="entry name" value="RIBOSOMAL_S8"/>
    <property type="match status" value="1"/>
</dbReference>
<gene>
    <name evidence="1" type="primary">rpsH</name>
    <name type="ordered locus">RC0992</name>
</gene>
<proteinExistence type="inferred from homology"/>
<protein>
    <recommendedName>
        <fullName evidence="1">Small ribosomal subunit protein uS8</fullName>
    </recommendedName>
    <alternativeName>
        <fullName evidence="2">30S ribosomal protein S8</fullName>
    </alternativeName>
</protein>
<evidence type="ECO:0000255" key="1">
    <source>
        <dbReference type="HAMAP-Rule" id="MF_01302"/>
    </source>
</evidence>
<evidence type="ECO:0000305" key="2"/>
<name>RS8_RICCN</name>
<reference key="1">
    <citation type="journal article" date="2001" name="Science">
        <title>Mechanisms of evolution in Rickettsia conorii and R. prowazekii.</title>
        <authorList>
            <person name="Ogata H."/>
            <person name="Audic S."/>
            <person name="Renesto-Audiffren P."/>
            <person name="Fournier P.-E."/>
            <person name="Barbe V."/>
            <person name="Samson D."/>
            <person name="Roux V."/>
            <person name="Cossart P."/>
            <person name="Weissenbach J."/>
            <person name="Claverie J.-M."/>
            <person name="Raoult D."/>
        </authorList>
    </citation>
    <scope>NUCLEOTIDE SEQUENCE [LARGE SCALE GENOMIC DNA]</scope>
    <source>
        <strain>ATCC VR-613 / Malish 7</strain>
    </source>
</reference>